<gene>
    <name type="primary">rhtB</name>
    <name type="ordered locus">SF3902</name>
    <name type="ordered locus">S3853</name>
</gene>
<evidence type="ECO:0000250" key="1"/>
<evidence type="ECO:0000255" key="2"/>
<evidence type="ECO:0000305" key="3"/>
<protein>
    <recommendedName>
        <fullName>Homoserine/homoserine lactone efflux protein</fullName>
    </recommendedName>
</protein>
<keyword id="KW-1003">Cell membrane</keyword>
<keyword id="KW-0472">Membrane</keyword>
<keyword id="KW-1185">Reference proteome</keyword>
<keyword id="KW-0812">Transmembrane</keyword>
<keyword id="KW-1133">Transmembrane helix</keyword>
<keyword id="KW-0813">Transport</keyword>
<name>RHTB_SHIFL</name>
<organism>
    <name type="scientific">Shigella flexneri</name>
    <dbReference type="NCBI Taxonomy" id="623"/>
    <lineage>
        <taxon>Bacteria</taxon>
        <taxon>Pseudomonadati</taxon>
        <taxon>Pseudomonadota</taxon>
        <taxon>Gammaproteobacteria</taxon>
        <taxon>Enterobacterales</taxon>
        <taxon>Enterobacteriaceae</taxon>
        <taxon>Shigella</taxon>
    </lineage>
</organism>
<feature type="chain" id="PRO_0000094735" description="Homoserine/homoserine lactone efflux protein">
    <location>
        <begin position="1"/>
        <end position="206"/>
    </location>
</feature>
<feature type="transmembrane region" description="Helical" evidence="2">
    <location>
        <begin position="5"/>
        <end position="25"/>
    </location>
</feature>
<feature type="transmembrane region" description="Helical" evidence="2">
    <location>
        <begin position="45"/>
        <end position="65"/>
    </location>
</feature>
<feature type="transmembrane region" description="Helical" evidence="2">
    <location>
        <begin position="68"/>
        <end position="88"/>
    </location>
</feature>
<feature type="transmembrane region" description="Helical" evidence="2">
    <location>
        <begin position="117"/>
        <end position="137"/>
    </location>
</feature>
<feature type="transmembrane region" description="Helical" evidence="2">
    <location>
        <begin position="148"/>
        <end position="168"/>
    </location>
</feature>
<feature type="transmembrane region" description="Helical" evidence="2">
    <location>
        <begin position="182"/>
        <end position="202"/>
    </location>
</feature>
<dbReference type="EMBL" id="AE005674">
    <property type="protein sequence ID" value="AAN45337.2"/>
    <property type="status" value="ALT_INIT"/>
    <property type="molecule type" value="Genomic_DNA"/>
</dbReference>
<dbReference type="EMBL" id="AE014073">
    <property type="protein sequence ID" value="AAP18861.1"/>
    <property type="status" value="ALT_INIT"/>
    <property type="molecule type" value="Genomic_DNA"/>
</dbReference>
<dbReference type="RefSeq" id="WP_000171710.1">
    <property type="nucleotide sequence ID" value="NZ_WPGW01000036.1"/>
</dbReference>
<dbReference type="STRING" id="198214.SF3902"/>
<dbReference type="PaxDb" id="198214-SF3902"/>
<dbReference type="GeneID" id="93778113"/>
<dbReference type="KEGG" id="sfx:S3853"/>
<dbReference type="PATRIC" id="fig|623.156.peg.2433"/>
<dbReference type="HOGENOM" id="CLU_079569_2_1_6"/>
<dbReference type="Proteomes" id="UP000001006">
    <property type="component" value="Chromosome"/>
</dbReference>
<dbReference type="Proteomes" id="UP000002673">
    <property type="component" value="Chromosome"/>
</dbReference>
<dbReference type="GO" id="GO:0005886">
    <property type="term" value="C:plasma membrane"/>
    <property type="evidence" value="ECO:0007669"/>
    <property type="project" value="UniProtKB-SubCell"/>
</dbReference>
<dbReference type="GO" id="GO:0042970">
    <property type="term" value="F:homoserine transmembrane transporter activity"/>
    <property type="evidence" value="ECO:0007669"/>
    <property type="project" value="TreeGrafter"/>
</dbReference>
<dbReference type="InterPro" id="IPR004778">
    <property type="entry name" value="Homoserine/Threonine_efflux"/>
</dbReference>
<dbReference type="InterPro" id="IPR001123">
    <property type="entry name" value="LeuE-type"/>
</dbReference>
<dbReference type="NCBIfam" id="TIGR00949">
    <property type="entry name" value="2A76"/>
    <property type="match status" value="1"/>
</dbReference>
<dbReference type="NCBIfam" id="NF007812">
    <property type="entry name" value="PRK10520.1"/>
    <property type="match status" value="1"/>
</dbReference>
<dbReference type="PANTHER" id="PTHR30086">
    <property type="entry name" value="ARGININE EXPORTER PROTEIN ARGO"/>
    <property type="match status" value="1"/>
</dbReference>
<dbReference type="PANTHER" id="PTHR30086:SF14">
    <property type="entry name" value="HOMOSERINE_HOMOSERINE LACTONE EFFLUX PROTEIN"/>
    <property type="match status" value="1"/>
</dbReference>
<dbReference type="Pfam" id="PF01810">
    <property type="entry name" value="LysE"/>
    <property type="match status" value="1"/>
</dbReference>
<dbReference type="PIRSF" id="PIRSF006324">
    <property type="entry name" value="LeuE"/>
    <property type="match status" value="1"/>
</dbReference>
<accession>P0AG37</accession>
<accession>P27847</accession>
<reference key="1">
    <citation type="journal article" date="2002" name="Nucleic Acids Res.">
        <title>Genome sequence of Shigella flexneri 2a: insights into pathogenicity through comparison with genomes of Escherichia coli K12 and O157.</title>
        <authorList>
            <person name="Jin Q."/>
            <person name="Yuan Z."/>
            <person name="Xu J."/>
            <person name="Wang Y."/>
            <person name="Shen Y."/>
            <person name="Lu W."/>
            <person name="Wang J."/>
            <person name="Liu H."/>
            <person name="Yang J."/>
            <person name="Yang F."/>
            <person name="Zhang X."/>
            <person name="Zhang J."/>
            <person name="Yang G."/>
            <person name="Wu H."/>
            <person name="Qu D."/>
            <person name="Dong J."/>
            <person name="Sun L."/>
            <person name="Xue Y."/>
            <person name="Zhao A."/>
            <person name="Gao Y."/>
            <person name="Zhu J."/>
            <person name="Kan B."/>
            <person name="Ding K."/>
            <person name="Chen S."/>
            <person name="Cheng H."/>
            <person name="Yao Z."/>
            <person name="He B."/>
            <person name="Chen R."/>
            <person name="Ma D."/>
            <person name="Qiang B."/>
            <person name="Wen Y."/>
            <person name="Hou Y."/>
            <person name="Yu J."/>
        </authorList>
    </citation>
    <scope>NUCLEOTIDE SEQUENCE [LARGE SCALE GENOMIC DNA]</scope>
    <source>
        <strain>301 / Serotype 2a</strain>
    </source>
</reference>
<reference key="2">
    <citation type="journal article" date="2003" name="Infect. Immun.">
        <title>Complete genome sequence and comparative genomics of Shigella flexneri serotype 2a strain 2457T.</title>
        <authorList>
            <person name="Wei J."/>
            <person name="Goldberg M.B."/>
            <person name="Burland V."/>
            <person name="Venkatesan M.M."/>
            <person name="Deng W."/>
            <person name="Fournier G."/>
            <person name="Mayhew G.F."/>
            <person name="Plunkett G. III"/>
            <person name="Rose D.J."/>
            <person name="Darling A."/>
            <person name="Mau B."/>
            <person name="Perna N.T."/>
            <person name="Payne S.M."/>
            <person name="Runyen-Janecky L.J."/>
            <person name="Zhou S."/>
            <person name="Schwartz D.C."/>
            <person name="Blattner F.R."/>
        </authorList>
    </citation>
    <scope>NUCLEOTIDE SEQUENCE [LARGE SCALE GENOMIC DNA]</scope>
    <source>
        <strain>ATCC 700930 / 2457T / Serotype 2a</strain>
    </source>
</reference>
<comment type="function">
    <text evidence="1">Conducts the efflux of homoserine and homoserine lactone.</text>
</comment>
<comment type="subcellular location">
    <subcellularLocation>
        <location evidence="3">Cell membrane</location>
        <topology evidence="3">Multi-pass membrane protein</topology>
    </subcellularLocation>
</comment>
<comment type="similarity">
    <text evidence="3">Belongs to the Rht family.</text>
</comment>
<comment type="sequence caution" evidence="3">
    <conflict type="erroneous initiation">
        <sequence resource="EMBL-CDS" id="AAN45337"/>
    </conflict>
    <text>Truncated N-terminus.</text>
</comment>
<comment type="sequence caution" evidence="3">
    <conflict type="erroneous initiation">
        <sequence resource="EMBL-CDS" id="AAP18861"/>
    </conflict>
    <text>Truncated N-terminus.</text>
</comment>
<sequence>MTLEWWFAYLLTSIILSLSPGSGAINTMTTSLNHGYRGAVASIAGLQTGLAIHIVLVGVGLGTLFSRSVIAFEVLKWAGAAYLIWLGIQQWRAAGAIDLKSLASTQSRRHLFQRAVFVNLTNPKSIVFLAALFPQFIMPQQPQLMQYIVLGVTTIVVDIIVMIGYATLAQRIALWIKGPKQMKALNKIFGSLFMLVGALLASARHA</sequence>
<proteinExistence type="inferred from homology"/>